<proteinExistence type="inferred from homology"/>
<feature type="chain" id="PRO_0000393743" description="Transposase InsE for insertion sequence IS3B">
    <location>
        <begin position="1"/>
        <end position="99"/>
    </location>
</feature>
<feature type="region of interest" description="Disordered" evidence="1">
    <location>
        <begin position="1"/>
        <end position="21"/>
    </location>
</feature>
<dbReference type="EMBL" id="U73857">
    <property type="protein sequence ID" value="AAB18096.1"/>
    <property type="status" value="ALT_INIT"/>
    <property type="molecule type" value="Genomic_DNA"/>
</dbReference>
<dbReference type="EMBL" id="U00096">
    <property type="protein sequence ID" value="AAC73476.2"/>
    <property type="molecule type" value="Genomic_DNA"/>
</dbReference>
<dbReference type="EMBL" id="AP009048">
    <property type="protein sequence ID" value="BAE76154.1"/>
    <property type="status" value="ALT_INIT"/>
    <property type="molecule type" value="Genomic_DNA"/>
</dbReference>
<dbReference type="PIR" id="A64845">
    <property type="entry name" value="A64845"/>
</dbReference>
<dbReference type="RefSeq" id="NP_061380.1">
    <property type="nucleotide sequence ID" value="NC_002483.1"/>
</dbReference>
<dbReference type="RefSeq" id="NP_061395.1">
    <property type="nucleotide sequence ID" value="NC_002483.1"/>
</dbReference>
<dbReference type="RefSeq" id="NP_414907.2">
    <property type="nucleotide sequence ID" value="NC_000913.3"/>
</dbReference>
<dbReference type="SMR" id="P0CF67"/>
<dbReference type="FunCoup" id="P0CF67">
    <property type="interactions" value="35"/>
</dbReference>
<dbReference type="EnsemblBacteria" id="AAC73476">
    <property type="protein sequence ID" value="AAC73476"/>
    <property type="gene ID" value="b0373"/>
</dbReference>
<dbReference type="GeneID" id="946900"/>
<dbReference type="KEGG" id="ecj:JW5050"/>
<dbReference type="KEGG" id="eco:b0298"/>
<dbReference type="KEGG" id="eco:b0373"/>
<dbReference type="KEGG" id="eco:b0540"/>
<dbReference type="KEGG" id="eco:b1027"/>
<dbReference type="KEGG" id="eco:b2088"/>
<dbReference type="KEGG" id="ecoc:C3026_01465"/>
<dbReference type="KEGG" id="ecoc:C3026_02655"/>
<dbReference type="KEGG" id="ecoc:C3026_06255"/>
<dbReference type="KEGG" id="ecoc:C3026_11725"/>
<dbReference type="KEGG" id="ecoc:C3026_24095"/>
<dbReference type="KEGG" id="ecoc:C3026_24185"/>
<dbReference type="KEGG" id="ecoc:C3026_24640"/>
<dbReference type="EchoBASE" id="EB4318"/>
<dbReference type="HOGENOM" id="CLU_027402_18_0_6"/>
<dbReference type="InParanoid" id="P0CF67"/>
<dbReference type="OMA" id="LHESQIY"/>
<dbReference type="PhylomeDB" id="P0CF67"/>
<dbReference type="BioCyc" id="EcoCyc:MONOMER0-4242"/>
<dbReference type="PRO" id="PR:P0CF67"/>
<dbReference type="Proteomes" id="UP000000625">
    <property type="component" value="Chromosome"/>
</dbReference>
<dbReference type="GO" id="GO:0003677">
    <property type="term" value="F:DNA binding"/>
    <property type="evidence" value="ECO:0007669"/>
    <property type="project" value="UniProtKB-KW"/>
</dbReference>
<dbReference type="GO" id="GO:0004803">
    <property type="term" value="F:transposase activity"/>
    <property type="evidence" value="ECO:0007669"/>
    <property type="project" value="InterPro"/>
</dbReference>
<dbReference type="GO" id="GO:0006313">
    <property type="term" value="P:DNA transposition"/>
    <property type="evidence" value="ECO:0007669"/>
    <property type="project" value="InterPro"/>
</dbReference>
<dbReference type="InterPro" id="IPR009057">
    <property type="entry name" value="Homeodomain-like_sf"/>
</dbReference>
<dbReference type="InterPro" id="IPR051839">
    <property type="entry name" value="RD_transcriptional_regulator"/>
</dbReference>
<dbReference type="InterPro" id="IPR002514">
    <property type="entry name" value="Transposase_8"/>
</dbReference>
<dbReference type="PANTHER" id="PTHR33215">
    <property type="entry name" value="PROTEIN DISTAL ANTENNA"/>
    <property type="match status" value="1"/>
</dbReference>
<dbReference type="PANTHER" id="PTHR33215:SF6">
    <property type="entry name" value="TRANSPOSASE INSE FOR INSERTION SEQUENCE IS3A-RELATED"/>
    <property type="match status" value="1"/>
</dbReference>
<dbReference type="Pfam" id="PF01527">
    <property type="entry name" value="HTH_Tnp_1"/>
    <property type="match status" value="1"/>
</dbReference>
<dbReference type="SUPFAM" id="SSF46689">
    <property type="entry name" value="Homeodomain-like"/>
    <property type="match status" value="1"/>
</dbReference>
<accession>P0CF67</accession>
<accession>P0ADH3</accession>
<accession>P77681</accession>
<accession>Q2MCC3</accession>
<accession>Q9S136</accession>
<keyword id="KW-0233">DNA recombination</keyword>
<keyword id="KW-0238">DNA-binding</keyword>
<keyword id="KW-1185">Reference proteome</keyword>
<keyword id="KW-0814">Transposable element</keyword>
<keyword id="KW-0815">Transposition</keyword>
<organism>
    <name type="scientific">Escherichia coli (strain K12)</name>
    <dbReference type="NCBI Taxonomy" id="83333"/>
    <lineage>
        <taxon>Bacteria</taxon>
        <taxon>Pseudomonadati</taxon>
        <taxon>Pseudomonadota</taxon>
        <taxon>Gammaproteobacteria</taxon>
        <taxon>Enterobacterales</taxon>
        <taxon>Enterobacteriaceae</taxon>
        <taxon>Escherichia</taxon>
    </lineage>
</organism>
<sequence length="99" mass="11543">MTKTVSTSKKPRKQHSPEFRSEALKLAERIGVTAAARELSLYESQLYNWRSKQQNQQTSSERELEMSTEIARLKRQLAERDEELAILQKAATYFAKRLK</sequence>
<reference key="1">
    <citation type="submission" date="1997-01" db="EMBL/GenBank/DDBJ databases">
        <title>Sequence of minutes 4-25 of Escherichia coli.</title>
        <authorList>
            <person name="Chung E."/>
            <person name="Allen E."/>
            <person name="Araujo R."/>
            <person name="Aparicio A.M."/>
            <person name="Davis K."/>
            <person name="Duncan M."/>
            <person name="Federspiel N."/>
            <person name="Hyman R."/>
            <person name="Kalman S."/>
            <person name="Komp C."/>
            <person name="Kurdi O."/>
            <person name="Lew H."/>
            <person name="Lin D."/>
            <person name="Namath A."/>
            <person name="Oefner P."/>
            <person name="Roberts D."/>
            <person name="Schramm S."/>
            <person name="Davis R.W."/>
        </authorList>
    </citation>
    <scope>NUCLEOTIDE SEQUENCE [LARGE SCALE GENOMIC DNA]</scope>
    <source>
        <strain>K12 / MG1655 / ATCC 47076</strain>
    </source>
</reference>
<reference key="2">
    <citation type="journal article" date="1997" name="Science">
        <title>The complete genome sequence of Escherichia coli K-12.</title>
        <authorList>
            <person name="Blattner F.R."/>
            <person name="Plunkett G. III"/>
            <person name="Bloch C.A."/>
            <person name="Perna N.T."/>
            <person name="Burland V."/>
            <person name="Riley M."/>
            <person name="Collado-Vides J."/>
            <person name="Glasner J.D."/>
            <person name="Rode C.K."/>
            <person name="Mayhew G.F."/>
            <person name="Gregor J."/>
            <person name="Davis N.W."/>
            <person name="Kirkpatrick H.A."/>
            <person name="Goeden M.A."/>
            <person name="Rose D.J."/>
            <person name="Mau B."/>
            <person name="Shao Y."/>
        </authorList>
    </citation>
    <scope>NUCLEOTIDE SEQUENCE [LARGE SCALE GENOMIC DNA]</scope>
    <source>
        <strain>K12 / MG1655 / ATCC 47076</strain>
    </source>
</reference>
<reference key="3">
    <citation type="journal article" date="2006" name="Mol. Syst. Biol.">
        <title>Highly accurate genome sequences of Escherichia coli K-12 strains MG1655 and W3110.</title>
        <authorList>
            <person name="Hayashi K."/>
            <person name="Morooka N."/>
            <person name="Yamamoto Y."/>
            <person name="Fujita K."/>
            <person name="Isono K."/>
            <person name="Choi S."/>
            <person name="Ohtsubo E."/>
            <person name="Baba T."/>
            <person name="Wanner B.L."/>
            <person name="Mori H."/>
            <person name="Horiuchi T."/>
        </authorList>
    </citation>
    <scope>NUCLEOTIDE SEQUENCE [LARGE SCALE GENOMIC DNA]</scope>
    <source>
        <strain>K12 / W3110 / ATCC 27325 / DSM 5911</strain>
    </source>
</reference>
<gene>
    <name type="primary">insE2</name>
    <name type="ordered locus">b0373</name>
    <name type="ordered locus">JW5050</name>
</gene>
<evidence type="ECO:0000256" key="1">
    <source>
        <dbReference type="SAM" id="MobiDB-lite"/>
    </source>
</evidence>
<evidence type="ECO:0000305" key="2"/>
<name>INSE2_ECOLI</name>
<protein>
    <recommendedName>
        <fullName>Transposase InsE for insertion sequence IS3B</fullName>
    </recommendedName>
</protein>
<comment type="function">
    <text>Involved in the transposition of the insertion sequence IS3.</text>
</comment>
<comment type="similarity">
    <text evidence="2">Belongs to the transposase 8 family.</text>
</comment>
<comment type="sequence caution" evidence="2">
    <conflict type="erroneous initiation">
        <sequence resource="EMBL-CDS" id="AAB18096"/>
    </conflict>
    <text>Extended N-terminus.</text>
</comment>
<comment type="sequence caution" evidence="2">
    <conflict type="erroneous initiation">
        <sequence resource="EMBL-CDS" id="BAE76154"/>
    </conflict>
    <text>Extended N-terminus.</text>
</comment>